<feature type="chain" id="PRO_1000143775" description="Large ribosomal subunit protein bL21">
    <location>
        <begin position="1"/>
        <end position="104"/>
    </location>
</feature>
<evidence type="ECO:0000255" key="1">
    <source>
        <dbReference type="HAMAP-Rule" id="MF_01363"/>
    </source>
</evidence>
<evidence type="ECO:0000305" key="2"/>
<reference key="1">
    <citation type="journal article" date="2007" name="PLoS ONE">
        <title>Analysis of the neurotoxin complex genes in Clostridium botulinum A1-A4 and B1 strains: BoNT/A3, /Ba4 and /B1 clusters are located within plasmids.</title>
        <authorList>
            <person name="Smith T.J."/>
            <person name="Hill K.K."/>
            <person name="Foley B.T."/>
            <person name="Detter J.C."/>
            <person name="Munk A.C."/>
            <person name="Bruce D.C."/>
            <person name="Doggett N.A."/>
            <person name="Smith L.A."/>
            <person name="Marks J.D."/>
            <person name="Xie G."/>
            <person name="Brettin T.S."/>
        </authorList>
    </citation>
    <scope>NUCLEOTIDE SEQUENCE [LARGE SCALE GENOMIC DNA]</scope>
    <source>
        <strain>Okra / Type B1</strain>
    </source>
</reference>
<keyword id="KW-0687">Ribonucleoprotein</keyword>
<keyword id="KW-0689">Ribosomal protein</keyword>
<keyword id="KW-0694">RNA-binding</keyword>
<keyword id="KW-0699">rRNA-binding</keyword>
<gene>
    <name evidence="1" type="primary">rplU</name>
    <name type="ordered locus">CLD_1555</name>
</gene>
<dbReference type="EMBL" id="CP000939">
    <property type="protein sequence ID" value="ACA43423.1"/>
    <property type="molecule type" value="Genomic_DNA"/>
</dbReference>
<dbReference type="RefSeq" id="WP_003357920.1">
    <property type="nucleotide sequence ID" value="NC_010516.1"/>
</dbReference>
<dbReference type="SMR" id="B1ILY8"/>
<dbReference type="KEGG" id="cbb:CLD_1555"/>
<dbReference type="HOGENOM" id="CLU_061463_3_2_9"/>
<dbReference type="Proteomes" id="UP000008541">
    <property type="component" value="Chromosome"/>
</dbReference>
<dbReference type="GO" id="GO:0005737">
    <property type="term" value="C:cytoplasm"/>
    <property type="evidence" value="ECO:0007669"/>
    <property type="project" value="UniProtKB-ARBA"/>
</dbReference>
<dbReference type="GO" id="GO:1990904">
    <property type="term" value="C:ribonucleoprotein complex"/>
    <property type="evidence" value="ECO:0007669"/>
    <property type="project" value="UniProtKB-KW"/>
</dbReference>
<dbReference type="GO" id="GO:0005840">
    <property type="term" value="C:ribosome"/>
    <property type="evidence" value="ECO:0007669"/>
    <property type="project" value="UniProtKB-KW"/>
</dbReference>
<dbReference type="GO" id="GO:0019843">
    <property type="term" value="F:rRNA binding"/>
    <property type="evidence" value="ECO:0007669"/>
    <property type="project" value="UniProtKB-UniRule"/>
</dbReference>
<dbReference type="GO" id="GO:0003735">
    <property type="term" value="F:structural constituent of ribosome"/>
    <property type="evidence" value="ECO:0007669"/>
    <property type="project" value="InterPro"/>
</dbReference>
<dbReference type="GO" id="GO:0006412">
    <property type="term" value="P:translation"/>
    <property type="evidence" value="ECO:0007669"/>
    <property type="project" value="UniProtKB-UniRule"/>
</dbReference>
<dbReference type="HAMAP" id="MF_01363">
    <property type="entry name" value="Ribosomal_bL21"/>
    <property type="match status" value="1"/>
</dbReference>
<dbReference type="InterPro" id="IPR028909">
    <property type="entry name" value="bL21-like"/>
</dbReference>
<dbReference type="InterPro" id="IPR036164">
    <property type="entry name" value="bL21-like_sf"/>
</dbReference>
<dbReference type="InterPro" id="IPR001787">
    <property type="entry name" value="Ribosomal_bL21"/>
</dbReference>
<dbReference type="InterPro" id="IPR018258">
    <property type="entry name" value="Ribosomal_bL21_CS"/>
</dbReference>
<dbReference type="NCBIfam" id="TIGR00061">
    <property type="entry name" value="L21"/>
    <property type="match status" value="1"/>
</dbReference>
<dbReference type="PANTHER" id="PTHR21349">
    <property type="entry name" value="50S RIBOSOMAL PROTEIN L21"/>
    <property type="match status" value="1"/>
</dbReference>
<dbReference type="PANTHER" id="PTHR21349:SF0">
    <property type="entry name" value="LARGE RIBOSOMAL SUBUNIT PROTEIN BL21M"/>
    <property type="match status" value="1"/>
</dbReference>
<dbReference type="Pfam" id="PF00829">
    <property type="entry name" value="Ribosomal_L21p"/>
    <property type="match status" value="1"/>
</dbReference>
<dbReference type="SUPFAM" id="SSF141091">
    <property type="entry name" value="L21p-like"/>
    <property type="match status" value="1"/>
</dbReference>
<dbReference type="PROSITE" id="PS01169">
    <property type="entry name" value="RIBOSOMAL_L21"/>
    <property type="match status" value="1"/>
</dbReference>
<organism>
    <name type="scientific">Clostridium botulinum (strain Okra / Type B1)</name>
    <dbReference type="NCBI Taxonomy" id="498213"/>
    <lineage>
        <taxon>Bacteria</taxon>
        <taxon>Bacillati</taxon>
        <taxon>Bacillota</taxon>
        <taxon>Clostridia</taxon>
        <taxon>Eubacteriales</taxon>
        <taxon>Clostridiaceae</taxon>
        <taxon>Clostridium</taxon>
    </lineage>
</organism>
<name>RL21_CLOBK</name>
<sequence>MYAVVVTGGKQYKVAEGDVLFVEKLTADVDSTVELDNVLLVGKDNGETVVGKPMVEGAKVTAKVLAQGKAKKVVVFKYKPKKDYRKKQGHRQPYTKIQIEKINA</sequence>
<accession>B1ILY8</accession>
<comment type="function">
    <text evidence="1">This protein binds to 23S rRNA in the presence of protein L20.</text>
</comment>
<comment type="subunit">
    <text evidence="1">Part of the 50S ribosomal subunit. Contacts protein L20.</text>
</comment>
<comment type="similarity">
    <text evidence="1">Belongs to the bacterial ribosomal protein bL21 family.</text>
</comment>
<protein>
    <recommendedName>
        <fullName evidence="1">Large ribosomal subunit protein bL21</fullName>
    </recommendedName>
    <alternativeName>
        <fullName evidence="2">50S ribosomal protein L21</fullName>
    </alternativeName>
</protein>
<proteinExistence type="inferred from homology"/>